<name>EDL16_ARATH</name>
<evidence type="ECO:0000250" key="1"/>
<evidence type="ECO:0000255" key="2"/>
<evidence type="ECO:0000305" key="3"/>
<gene>
    <name type="ordered locus">At5g18840</name>
    <name type="ORF">F17K4.90</name>
</gene>
<keyword id="KW-0472">Membrane</keyword>
<keyword id="KW-1185">Reference proteome</keyword>
<keyword id="KW-0762">Sugar transport</keyword>
<keyword id="KW-0812">Transmembrane</keyword>
<keyword id="KW-1133">Transmembrane helix</keyword>
<keyword id="KW-0813">Transport</keyword>
<sequence length="482" mass="51992">MAIREIKDVERGEIVNKVEDLGKPFLTHEDDEKESENNESYLMVLFSTFVAVCGSFEFGSCVGYSAPTQSSIRQDLNLSLAEFSMFGSILTIGAMLGAVMSGKISDFSGRKGAMRTSACFCITGWLAVFFTKGALLLDVGRFFTGYGIGVFSYVVPVYIAEISPKNLRGGLTTLNQLMIVIGSSVSFLIGSLISWKTLALTGLAPCIVLLFGLCFIPESPRWLAKAGHEKEFRVALQKLRGKDADITNEADGIQVSIQALEILPKARIQDLVSKKYGRSVIIGVSLMVFQQFVGINGIGFYASETFVKAGFTSGKLGTIAIACVQVPITVLGTILIDKSGRRPLIMISAGGIFLGCILTGTSFLLKGQSLLLEWVPSLAVGGVLIYVAAFSIGMGPVPWVIMSEIFPINVKGIAGSLVVLVNWSGAWAVSYTFNFLMSWSSPGTFYLYSAFAAATIIFVAKMVPETKGKTLEEIQACIRRET</sequence>
<accession>Q8LBI9</accession>
<accession>Q8VZI5</accession>
<proteinExistence type="evidence at transcript level"/>
<reference key="1">
    <citation type="journal article" date="2000" name="Nature">
        <title>Sequence and analysis of chromosome 5 of the plant Arabidopsis thaliana.</title>
        <authorList>
            <person name="Tabata S."/>
            <person name="Kaneko T."/>
            <person name="Nakamura Y."/>
            <person name="Kotani H."/>
            <person name="Kato T."/>
            <person name="Asamizu E."/>
            <person name="Miyajima N."/>
            <person name="Sasamoto S."/>
            <person name="Kimura T."/>
            <person name="Hosouchi T."/>
            <person name="Kawashima K."/>
            <person name="Kohara M."/>
            <person name="Matsumoto M."/>
            <person name="Matsuno A."/>
            <person name="Muraki A."/>
            <person name="Nakayama S."/>
            <person name="Nakazaki N."/>
            <person name="Naruo K."/>
            <person name="Okumura S."/>
            <person name="Shinpo S."/>
            <person name="Takeuchi C."/>
            <person name="Wada T."/>
            <person name="Watanabe A."/>
            <person name="Yamada M."/>
            <person name="Yasuda M."/>
            <person name="Sato S."/>
            <person name="de la Bastide M."/>
            <person name="Huang E."/>
            <person name="Spiegel L."/>
            <person name="Gnoj L."/>
            <person name="O'Shaughnessy A."/>
            <person name="Preston R."/>
            <person name="Habermann K."/>
            <person name="Murray J."/>
            <person name="Johnson D."/>
            <person name="Rohlfing T."/>
            <person name="Nelson J."/>
            <person name="Stoneking T."/>
            <person name="Pepin K."/>
            <person name="Spieth J."/>
            <person name="Sekhon M."/>
            <person name="Armstrong J."/>
            <person name="Becker M."/>
            <person name="Belter E."/>
            <person name="Cordum H."/>
            <person name="Cordes M."/>
            <person name="Courtney L."/>
            <person name="Courtney W."/>
            <person name="Dante M."/>
            <person name="Du H."/>
            <person name="Edwards J."/>
            <person name="Fryman J."/>
            <person name="Haakensen B."/>
            <person name="Lamar E."/>
            <person name="Latreille P."/>
            <person name="Leonard S."/>
            <person name="Meyer R."/>
            <person name="Mulvaney E."/>
            <person name="Ozersky P."/>
            <person name="Riley A."/>
            <person name="Strowmatt C."/>
            <person name="Wagner-McPherson C."/>
            <person name="Wollam A."/>
            <person name="Yoakum M."/>
            <person name="Bell M."/>
            <person name="Dedhia N."/>
            <person name="Parnell L."/>
            <person name="Shah R."/>
            <person name="Rodriguez M."/>
            <person name="Hoon See L."/>
            <person name="Vil D."/>
            <person name="Baker J."/>
            <person name="Kirchoff K."/>
            <person name="Toth K."/>
            <person name="King L."/>
            <person name="Bahret A."/>
            <person name="Miller B."/>
            <person name="Marra M.A."/>
            <person name="Martienssen R."/>
            <person name="McCombie W.R."/>
            <person name="Wilson R.K."/>
            <person name="Murphy G."/>
            <person name="Bancroft I."/>
            <person name="Volckaert G."/>
            <person name="Wambutt R."/>
            <person name="Duesterhoeft A."/>
            <person name="Stiekema W."/>
            <person name="Pohl T."/>
            <person name="Entian K.-D."/>
            <person name="Terryn N."/>
            <person name="Hartley N."/>
            <person name="Bent E."/>
            <person name="Johnson S."/>
            <person name="Langham S.-A."/>
            <person name="McCullagh B."/>
            <person name="Robben J."/>
            <person name="Grymonprez B."/>
            <person name="Zimmermann W."/>
            <person name="Ramsperger U."/>
            <person name="Wedler H."/>
            <person name="Balke K."/>
            <person name="Wedler E."/>
            <person name="Peters S."/>
            <person name="van Staveren M."/>
            <person name="Dirkse W."/>
            <person name="Mooijman P."/>
            <person name="Klein Lankhorst R."/>
            <person name="Weitzenegger T."/>
            <person name="Bothe G."/>
            <person name="Rose M."/>
            <person name="Hauf J."/>
            <person name="Berneiser S."/>
            <person name="Hempel S."/>
            <person name="Feldpausch M."/>
            <person name="Lamberth S."/>
            <person name="Villarroel R."/>
            <person name="Gielen J."/>
            <person name="Ardiles W."/>
            <person name="Bents O."/>
            <person name="Lemcke K."/>
            <person name="Kolesov G."/>
            <person name="Mayer K.F.X."/>
            <person name="Rudd S."/>
            <person name="Schoof H."/>
            <person name="Schueller C."/>
            <person name="Zaccaria P."/>
            <person name="Mewes H.-W."/>
            <person name="Bevan M."/>
            <person name="Fransz P.F."/>
        </authorList>
    </citation>
    <scope>NUCLEOTIDE SEQUENCE [LARGE SCALE GENOMIC DNA]</scope>
    <source>
        <strain>cv. Columbia</strain>
    </source>
</reference>
<reference key="2">
    <citation type="journal article" date="2017" name="Plant J.">
        <title>Araport11: a complete reannotation of the Arabidopsis thaliana reference genome.</title>
        <authorList>
            <person name="Cheng C.Y."/>
            <person name="Krishnakumar V."/>
            <person name="Chan A.P."/>
            <person name="Thibaud-Nissen F."/>
            <person name="Schobel S."/>
            <person name="Town C.D."/>
        </authorList>
    </citation>
    <scope>GENOME REANNOTATION</scope>
    <source>
        <strain>cv. Columbia</strain>
    </source>
</reference>
<reference key="3">
    <citation type="journal article" date="2003" name="Science">
        <title>Empirical analysis of transcriptional activity in the Arabidopsis genome.</title>
        <authorList>
            <person name="Yamada K."/>
            <person name="Lim J."/>
            <person name="Dale J.M."/>
            <person name="Chen H."/>
            <person name="Shinn P."/>
            <person name="Palm C.J."/>
            <person name="Southwick A.M."/>
            <person name="Wu H.C."/>
            <person name="Kim C.J."/>
            <person name="Nguyen M."/>
            <person name="Pham P.K."/>
            <person name="Cheuk R.F."/>
            <person name="Karlin-Newmann G."/>
            <person name="Liu S.X."/>
            <person name="Lam B."/>
            <person name="Sakano H."/>
            <person name="Wu T."/>
            <person name="Yu G."/>
            <person name="Miranda M."/>
            <person name="Quach H.L."/>
            <person name="Tripp M."/>
            <person name="Chang C.H."/>
            <person name="Lee J.M."/>
            <person name="Toriumi M.J."/>
            <person name="Chan M.M."/>
            <person name="Tang C.C."/>
            <person name="Onodera C.S."/>
            <person name="Deng J.M."/>
            <person name="Akiyama K."/>
            <person name="Ansari Y."/>
            <person name="Arakawa T."/>
            <person name="Banh J."/>
            <person name="Banno F."/>
            <person name="Bowser L."/>
            <person name="Brooks S.Y."/>
            <person name="Carninci P."/>
            <person name="Chao Q."/>
            <person name="Choy N."/>
            <person name="Enju A."/>
            <person name="Goldsmith A.D."/>
            <person name="Gurjal M."/>
            <person name="Hansen N.F."/>
            <person name="Hayashizaki Y."/>
            <person name="Johnson-Hopson C."/>
            <person name="Hsuan V.W."/>
            <person name="Iida K."/>
            <person name="Karnes M."/>
            <person name="Khan S."/>
            <person name="Koesema E."/>
            <person name="Ishida J."/>
            <person name="Jiang P.X."/>
            <person name="Jones T."/>
            <person name="Kawai J."/>
            <person name="Kamiya A."/>
            <person name="Meyers C."/>
            <person name="Nakajima M."/>
            <person name="Narusaka M."/>
            <person name="Seki M."/>
            <person name="Sakurai T."/>
            <person name="Satou M."/>
            <person name="Tamse R."/>
            <person name="Vaysberg M."/>
            <person name="Wallender E.K."/>
            <person name="Wong C."/>
            <person name="Yamamura Y."/>
            <person name="Yuan S."/>
            <person name="Shinozaki K."/>
            <person name="Davis R.W."/>
            <person name="Theologis A."/>
            <person name="Ecker J.R."/>
        </authorList>
    </citation>
    <scope>NUCLEOTIDE SEQUENCE [LARGE SCALE MRNA]</scope>
    <source>
        <strain>cv. Columbia</strain>
    </source>
</reference>
<reference key="4">
    <citation type="submission" date="2002-03" db="EMBL/GenBank/DDBJ databases">
        <title>Full-length cDNA from Arabidopsis thaliana.</title>
        <authorList>
            <person name="Brover V.V."/>
            <person name="Troukhan M.E."/>
            <person name="Alexandrov N.A."/>
            <person name="Lu Y.-P."/>
            <person name="Flavell R.B."/>
            <person name="Feldmann K.A."/>
        </authorList>
    </citation>
    <scope>NUCLEOTIDE SEQUENCE [LARGE SCALE MRNA]</scope>
</reference>
<reference key="5">
    <citation type="journal article" date="2006" name="BMC Evol. Biol.">
        <title>The monosaccharide transporter gene family in land plants is ancient and shows differential subfamily expression and expansion across lineages.</title>
        <authorList>
            <person name="Johnson D.A."/>
            <person name="Hill J.P."/>
            <person name="Thomas M.A."/>
        </authorList>
    </citation>
    <scope>GENE FAMILY</scope>
</reference>
<protein>
    <recommendedName>
        <fullName>Sugar transporter ERD6-like 16</fullName>
    </recommendedName>
</protein>
<comment type="function">
    <text evidence="3">Sugar transporter.</text>
</comment>
<comment type="subcellular location">
    <subcellularLocation>
        <location evidence="1">Membrane</location>
        <topology evidence="1">Multi-pass membrane protein</topology>
    </subcellularLocation>
</comment>
<comment type="similarity">
    <text evidence="3">Belongs to the major facilitator superfamily. Sugar transporter (TC 2.A.1.1) family.</text>
</comment>
<organism>
    <name type="scientific">Arabidopsis thaliana</name>
    <name type="common">Mouse-ear cress</name>
    <dbReference type="NCBI Taxonomy" id="3702"/>
    <lineage>
        <taxon>Eukaryota</taxon>
        <taxon>Viridiplantae</taxon>
        <taxon>Streptophyta</taxon>
        <taxon>Embryophyta</taxon>
        <taxon>Tracheophyta</taxon>
        <taxon>Spermatophyta</taxon>
        <taxon>Magnoliopsida</taxon>
        <taxon>eudicotyledons</taxon>
        <taxon>Gunneridae</taxon>
        <taxon>Pentapetalae</taxon>
        <taxon>rosids</taxon>
        <taxon>malvids</taxon>
        <taxon>Brassicales</taxon>
        <taxon>Brassicaceae</taxon>
        <taxon>Camelineae</taxon>
        <taxon>Arabidopsis</taxon>
    </lineage>
</organism>
<feature type="chain" id="PRO_0000259866" description="Sugar transporter ERD6-like 16">
    <location>
        <begin position="1"/>
        <end position="482"/>
    </location>
</feature>
<feature type="transmembrane region" description="Helical; Name=1" evidence="2">
    <location>
        <begin position="42"/>
        <end position="62"/>
    </location>
</feature>
<feature type="transmembrane region" description="Helical; Name=2" evidence="2">
    <location>
        <begin position="80"/>
        <end position="100"/>
    </location>
</feature>
<feature type="transmembrane region" description="Helical; Name=3" evidence="2">
    <location>
        <begin position="117"/>
        <end position="137"/>
    </location>
</feature>
<feature type="transmembrane region" description="Helical; Name=4" evidence="2">
    <location>
        <begin position="142"/>
        <end position="162"/>
    </location>
</feature>
<feature type="transmembrane region" description="Helical; Name=5" evidence="2">
    <location>
        <begin position="173"/>
        <end position="193"/>
    </location>
</feature>
<feature type="transmembrane region" description="Helical; Name=6" evidence="2">
    <location>
        <begin position="197"/>
        <end position="217"/>
    </location>
</feature>
<feature type="transmembrane region" description="Helical; Name=7" evidence="2">
    <location>
        <begin position="280"/>
        <end position="300"/>
    </location>
</feature>
<feature type="transmembrane region" description="Helical; Name=8" evidence="2">
    <location>
        <begin position="316"/>
        <end position="336"/>
    </location>
</feature>
<feature type="transmembrane region" description="Helical; Name=9" evidence="2">
    <location>
        <begin position="344"/>
        <end position="364"/>
    </location>
</feature>
<feature type="transmembrane region" description="Helical; Name=10" evidence="2">
    <location>
        <begin position="382"/>
        <end position="402"/>
    </location>
</feature>
<feature type="transmembrane region" description="Helical; Name=11" evidence="2">
    <location>
        <begin position="413"/>
        <end position="433"/>
    </location>
</feature>
<feature type="transmembrane region" description="Helical; Name=12" evidence="2">
    <location>
        <begin position="443"/>
        <end position="463"/>
    </location>
</feature>
<feature type="sequence conflict" description="In Ref. 4; AAM64736." evidence="3" ref="4">
    <original>G</original>
    <variation>V</variation>
    <location>
        <position position="202"/>
    </location>
</feature>
<dbReference type="EMBL" id="AC068655">
    <property type="status" value="NOT_ANNOTATED_CDS"/>
    <property type="molecule type" value="Genomic_DNA"/>
</dbReference>
<dbReference type="EMBL" id="CP002688">
    <property type="protein sequence ID" value="AED92620.1"/>
    <property type="molecule type" value="Genomic_DNA"/>
</dbReference>
<dbReference type="EMBL" id="AY064144">
    <property type="protein sequence ID" value="AAL36051.1"/>
    <property type="molecule type" value="mRNA"/>
</dbReference>
<dbReference type="EMBL" id="BT000608">
    <property type="protein sequence ID" value="AAN18269.1"/>
    <property type="molecule type" value="mRNA"/>
</dbReference>
<dbReference type="EMBL" id="AY087180">
    <property type="protein sequence ID" value="AAM64736.1"/>
    <property type="molecule type" value="mRNA"/>
</dbReference>
<dbReference type="RefSeq" id="NP_568367.1">
    <property type="nucleotide sequence ID" value="NM_121889.3"/>
</dbReference>
<dbReference type="SMR" id="Q8LBI9"/>
<dbReference type="FunCoup" id="Q8LBI9">
    <property type="interactions" value="857"/>
</dbReference>
<dbReference type="STRING" id="3702.Q8LBI9"/>
<dbReference type="PaxDb" id="3702-AT5G18840.1"/>
<dbReference type="ProteomicsDB" id="224726"/>
<dbReference type="EnsemblPlants" id="AT5G18840.1">
    <property type="protein sequence ID" value="AT5G18840.1"/>
    <property type="gene ID" value="AT5G18840"/>
</dbReference>
<dbReference type="GeneID" id="832002"/>
<dbReference type="Gramene" id="AT5G18840.1">
    <property type="protein sequence ID" value="AT5G18840.1"/>
    <property type="gene ID" value="AT5G18840"/>
</dbReference>
<dbReference type="KEGG" id="ath:AT5G18840"/>
<dbReference type="Araport" id="AT5G18840"/>
<dbReference type="TAIR" id="AT5G18840"/>
<dbReference type="eggNOG" id="KOG0254">
    <property type="taxonomic scope" value="Eukaryota"/>
</dbReference>
<dbReference type="HOGENOM" id="CLU_001265_30_5_1"/>
<dbReference type="InParanoid" id="Q8LBI9"/>
<dbReference type="OMA" id="AQSANWF"/>
<dbReference type="OrthoDB" id="6133115at2759"/>
<dbReference type="PhylomeDB" id="Q8LBI9"/>
<dbReference type="PRO" id="PR:Q8LBI9"/>
<dbReference type="Proteomes" id="UP000006548">
    <property type="component" value="Chromosome 5"/>
</dbReference>
<dbReference type="ExpressionAtlas" id="Q8LBI9">
    <property type="expression patterns" value="baseline and differential"/>
</dbReference>
<dbReference type="GO" id="GO:0016020">
    <property type="term" value="C:membrane"/>
    <property type="evidence" value="ECO:0007669"/>
    <property type="project" value="UniProtKB-SubCell"/>
</dbReference>
<dbReference type="GO" id="GO:0051119">
    <property type="term" value="F:sugar transmembrane transporter activity"/>
    <property type="evidence" value="ECO:0007669"/>
    <property type="project" value="InterPro"/>
</dbReference>
<dbReference type="CDD" id="cd17358">
    <property type="entry name" value="MFS_GLUT6_8_Class3_like"/>
    <property type="match status" value="1"/>
</dbReference>
<dbReference type="FunFam" id="1.20.1250.20:FF:000043">
    <property type="entry name" value="sugar transporter ERD6-like 6"/>
    <property type="match status" value="1"/>
</dbReference>
<dbReference type="Gene3D" id="1.20.1250.20">
    <property type="entry name" value="MFS general substrate transporter like domains"/>
    <property type="match status" value="1"/>
</dbReference>
<dbReference type="InterPro" id="IPR020846">
    <property type="entry name" value="MFS_dom"/>
</dbReference>
<dbReference type="InterPro" id="IPR044775">
    <property type="entry name" value="MFS_ERD6/Tret1-like"/>
</dbReference>
<dbReference type="InterPro" id="IPR005828">
    <property type="entry name" value="MFS_sugar_transport-like"/>
</dbReference>
<dbReference type="InterPro" id="IPR036259">
    <property type="entry name" value="MFS_trans_sf"/>
</dbReference>
<dbReference type="InterPro" id="IPR050549">
    <property type="entry name" value="MFS_Trehalose_Transporter"/>
</dbReference>
<dbReference type="InterPro" id="IPR003663">
    <property type="entry name" value="Sugar/inositol_transpt"/>
</dbReference>
<dbReference type="NCBIfam" id="TIGR00879">
    <property type="entry name" value="SP"/>
    <property type="match status" value="1"/>
</dbReference>
<dbReference type="PANTHER" id="PTHR48021">
    <property type="match status" value="1"/>
</dbReference>
<dbReference type="PANTHER" id="PTHR48021:SF37">
    <property type="entry name" value="SUGAR TRANSPORTER ERD6-LIKE 16"/>
    <property type="match status" value="1"/>
</dbReference>
<dbReference type="Pfam" id="PF00083">
    <property type="entry name" value="Sugar_tr"/>
    <property type="match status" value="1"/>
</dbReference>
<dbReference type="PRINTS" id="PR00171">
    <property type="entry name" value="SUGRTRNSPORT"/>
</dbReference>
<dbReference type="SUPFAM" id="SSF103473">
    <property type="entry name" value="MFS general substrate transporter"/>
    <property type="match status" value="1"/>
</dbReference>
<dbReference type="PROSITE" id="PS50850">
    <property type="entry name" value="MFS"/>
    <property type="match status" value="1"/>
</dbReference>